<keyword id="KW-0472">Membrane</keyword>
<keyword id="KW-0496">Mitochondrion</keyword>
<keyword id="KW-0999">Mitochondrion inner membrane</keyword>
<keyword id="KW-1185">Reference proteome</keyword>
<keyword id="KW-0809">Transit peptide</keyword>
<keyword id="KW-0812">Transmembrane</keyword>
<keyword id="KW-1133">Transmembrane helix</keyword>
<evidence type="ECO:0000250" key="1">
    <source>
        <dbReference type="UniProtKB" id="P32799"/>
    </source>
</evidence>
<evidence type="ECO:0000255" key="2"/>
<evidence type="ECO:0000269" key="3">
    <source>
    </source>
</evidence>
<evidence type="ECO:0000269" key="4">
    <source>
    </source>
</evidence>
<evidence type="ECO:0000303" key="5">
    <source>
    </source>
</evidence>
<evidence type="ECO:0000305" key="6"/>
<evidence type="ECO:0000305" key="7">
    <source>
    </source>
</evidence>
<protein>
    <recommendedName>
        <fullName>Cytochrome c oxidase subunit 13, mitochondrial</fullName>
    </recommendedName>
    <alternativeName>
        <fullName>Cytochrome c oxidase polypeptide VIa</fullName>
    </alternativeName>
    <alternativeName>
        <fullName evidence="5">Cytochrome c oxidase subunit Cox6a</fullName>
    </alternativeName>
    <alternativeName>
        <fullName>Encodes anonymous transcript-5 protein</fullName>
    </alternativeName>
</protein>
<dbReference type="EMBL" id="CM002236">
    <property type="protein sequence ID" value="ESA43841.1"/>
    <property type="molecule type" value="Genomic_DNA"/>
</dbReference>
<dbReference type="RefSeq" id="XP_011392913.1">
    <property type="nucleotide sequence ID" value="XM_011394611.1"/>
</dbReference>
<dbReference type="SMR" id="V5IRD7"/>
<dbReference type="FunCoup" id="V5IRD7">
    <property type="interactions" value="258"/>
</dbReference>
<dbReference type="STRING" id="367110.V5IRD7"/>
<dbReference type="PaxDb" id="5141-EFNCRP00000001261"/>
<dbReference type="EnsemblFungi" id="ESA43841">
    <property type="protein sequence ID" value="ESA43841"/>
    <property type="gene ID" value="NCU01962"/>
</dbReference>
<dbReference type="GeneID" id="3880491"/>
<dbReference type="VEuPathDB" id="FungiDB:NCU01962"/>
<dbReference type="HOGENOM" id="CLU_122515_0_0_1"/>
<dbReference type="InParanoid" id="V5IRD7"/>
<dbReference type="OrthoDB" id="5947505at2759"/>
<dbReference type="UniPathway" id="UPA00705"/>
<dbReference type="Proteomes" id="UP000001805">
    <property type="component" value="Chromosome 1, Linkage Group I"/>
</dbReference>
<dbReference type="GO" id="GO:0005743">
    <property type="term" value="C:mitochondrial inner membrane"/>
    <property type="evidence" value="ECO:0007669"/>
    <property type="project" value="UniProtKB-SubCell"/>
</dbReference>
<dbReference type="GO" id="GO:0045277">
    <property type="term" value="C:respiratory chain complex IV"/>
    <property type="evidence" value="ECO:0000318"/>
    <property type="project" value="GO_Central"/>
</dbReference>
<dbReference type="GO" id="GO:0004129">
    <property type="term" value="F:cytochrome-c oxidase activity"/>
    <property type="evidence" value="ECO:0007669"/>
    <property type="project" value="EnsemblFungi"/>
</dbReference>
<dbReference type="GO" id="GO:0030234">
    <property type="term" value="F:enzyme regulator activity"/>
    <property type="evidence" value="ECO:0000318"/>
    <property type="project" value="GO_Central"/>
</dbReference>
<dbReference type="GO" id="GO:0006123">
    <property type="term" value="P:mitochondrial electron transport, cytochrome c to oxygen"/>
    <property type="evidence" value="ECO:0000318"/>
    <property type="project" value="GO_Central"/>
</dbReference>
<dbReference type="GO" id="GO:0097250">
    <property type="term" value="P:mitochondrial respirasome assembly"/>
    <property type="evidence" value="ECO:0007669"/>
    <property type="project" value="EnsemblFungi"/>
</dbReference>
<dbReference type="CDD" id="cd00925">
    <property type="entry name" value="Cyt_c_Oxidase_VIa"/>
    <property type="match status" value="1"/>
</dbReference>
<dbReference type="FunFam" id="4.10.95.10:FF:000001">
    <property type="entry name" value="Cytochrome c oxidase subunit 6A, mitochondrial"/>
    <property type="match status" value="1"/>
</dbReference>
<dbReference type="Gene3D" id="4.10.95.10">
    <property type="entry name" value="Cytochrome c oxidase, subunit VIa"/>
    <property type="match status" value="1"/>
</dbReference>
<dbReference type="InterPro" id="IPR001349">
    <property type="entry name" value="Cyt_c_oxidase_su6a"/>
</dbReference>
<dbReference type="InterPro" id="IPR036418">
    <property type="entry name" value="Cyt_c_oxidase_su6a_sf"/>
</dbReference>
<dbReference type="PANTHER" id="PTHR11504">
    <property type="entry name" value="CYTOCHROME C OXIDASE POLYPEPTIDE VIA"/>
    <property type="match status" value="1"/>
</dbReference>
<dbReference type="PANTHER" id="PTHR11504:SF0">
    <property type="entry name" value="CYTOCHROME C OXIDASE SUBUNIT"/>
    <property type="match status" value="1"/>
</dbReference>
<dbReference type="Pfam" id="PF02046">
    <property type="entry name" value="COX6A"/>
    <property type="match status" value="1"/>
</dbReference>
<dbReference type="SUPFAM" id="SSF81411">
    <property type="entry name" value="Mitochondrial cytochrome c oxidase subunit VIa"/>
    <property type="match status" value="1"/>
</dbReference>
<comment type="function">
    <text evidence="1">Component of the cytochrome c oxidase, the last enzyme in the mitochondrial electron transport chain which drives oxidative phosphorylation. The respiratory chain contains 3 multisubunit complexes succinate dehydrogenase (complex II, CII), ubiquinol-cytochrome c oxidoreductase (cytochrome b-c1 complex, complex III, CIII) and cytochrome c oxidase (complex IV, CIV), that cooperate to transfer electrons derived from NADH and succinate to molecular oxygen, creating an electrochemical gradient over the inner membrane that drives transmembrane transport and the ATP synthase. Cytochrome c oxidase is the component of the respiratory chain that catalyzes the reduction of oxygen to water. Electrons originating from reduced cytochrome c in the intermembrane space (IMS) are transferred via the dinuclear copper A center (CU(A)) of Cox2 and heme A of Cox1 to the active site in Cox1, a binuclear center (BNC) formed by heme A3 and copper B (CU(B)). The BNC reduces molecular oxygen to 2 water molecules using 4 electrons from cytochrome c in the IMS and 4 protons from the mitochondrial matrix.</text>
</comment>
<comment type="pathway">
    <text evidence="1">Energy metabolism; oxidative phosphorylation.</text>
</comment>
<comment type="subunit">
    <text evidence="3 4 7">Component of the cytochrome c oxidase (complex IV, CIV), a multisubunit enzyme composed of 11 subunits. The complex is composed of a catalytic core of 3 subunits Cox1, Cox2 and Cox3, encoded in the mitochondrial DNA, and 8 supernumerary subunits Cox4, Cox5a/Cox5, Cox6, Cox7, Cox8, Cox7a/Cox9, Cox6b/Cox12 and Cox6a/Cox13, which are encoded in the nuclear genome (PubMed:31316820). The complex exists as a monomer or a dimer and forms respiratory supercomplexes (SCs) in the inner mitochondrial membrane with NADH-ubiquinone oxidoreductase (complex I, CI) and ubiquinol-cytochrome c oxidoreductase (cytochrome b-c1 complex, complex III, CIII), resulting in various different assemblies (supercomplexes I(1)IV(1), I(1)III(3)IV(2), III(2)IV(1) and III(2)IV(2) as well as larger supercomplexes of compositions like I(1)III(2)IV(5-6)) (PubMed:17873079). Cox6a/Cox13 was not present in the cryo-EM structure. It may be involved in complex IV dimer formation and might not be always expressed. This would explain its absence in the map of the isolated monomer (Probable).</text>
</comment>
<comment type="subcellular location">
    <subcellularLocation>
        <location evidence="4">Mitochondrion inner membrane</location>
        <topology evidence="4">Single-pass membrane protein</topology>
    </subcellularLocation>
</comment>
<comment type="similarity">
    <text evidence="6">Belongs to the cytochrome c oxidase subunit 6A family.</text>
</comment>
<feature type="transit peptide" description="Mitochondrion" evidence="2">
    <location>
        <begin position="1"/>
        <end position="29"/>
    </location>
</feature>
<feature type="chain" id="PRO_0000448903" description="Cytochrome c oxidase subunit 13, mitochondrial">
    <location>
        <begin position="30"/>
        <end position="136"/>
    </location>
</feature>
<feature type="topological domain" description="Mitochondrial matrix" evidence="4">
    <location>
        <begin position="30"/>
        <end position="62"/>
    </location>
</feature>
<feature type="transmembrane region" description="Helical" evidence="4">
    <location>
        <begin position="63"/>
        <end position="83"/>
    </location>
</feature>
<feature type="topological domain" description="Mitochondrial intermembrane" evidence="4">
    <location>
        <begin position="84"/>
        <end position="136"/>
    </location>
</feature>
<name>COX13_NEUCR</name>
<proteinExistence type="evidence at protein level"/>
<reference key="1">
    <citation type="journal article" date="2003" name="Nature">
        <title>The genome sequence of the filamentous fungus Neurospora crassa.</title>
        <authorList>
            <person name="Galagan J.E."/>
            <person name="Calvo S.E."/>
            <person name="Borkovich K.A."/>
            <person name="Selker E.U."/>
            <person name="Read N.D."/>
            <person name="Jaffe D.B."/>
            <person name="FitzHugh W."/>
            <person name="Ma L.-J."/>
            <person name="Smirnov S."/>
            <person name="Purcell S."/>
            <person name="Rehman B."/>
            <person name="Elkins T."/>
            <person name="Engels R."/>
            <person name="Wang S."/>
            <person name="Nielsen C.B."/>
            <person name="Butler J."/>
            <person name="Endrizzi M."/>
            <person name="Qui D."/>
            <person name="Ianakiev P."/>
            <person name="Bell-Pedersen D."/>
            <person name="Nelson M.A."/>
            <person name="Werner-Washburne M."/>
            <person name="Selitrennikoff C.P."/>
            <person name="Kinsey J.A."/>
            <person name="Braun E.L."/>
            <person name="Zelter A."/>
            <person name="Schulte U."/>
            <person name="Kothe G.O."/>
            <person name="Jedd G."/>
            <person name="Mewes H.-W."/>
            <person name="Staben C."/>
            <person name="Marcotte E."/>
            <person name="Greenberg D."/>
            <person name="Roy A."/>
            <person name="Foley K."/>
            <person name="Naylor J."/>
            <person name="Stange-Thomann N."/>
            <person name="Barrett R."/>
            <person name="Gnerre S."/>
            <person name="Kamal M."/>
            <person name="Kamvysselis M."/>
            <person name="Mauceli E.W."/>
            <person name="Bielke C."/>
            <person name="Rudd S."/>
            <person name="Frishman D."/>
            <person name="Krystofova S."/>
            <person name="Rasmussen C."/>
            <person name="Metzenberg R.L."/>
            <person name="Perkins D.D."/>
            <person name="Kroken S."/>
            <person name="Cogoni C."/>
            <person name="Macino G."/>
            <person name="Catcheside D.E.A."/>
            <person name="Li W."/>
            <person name="Pratt R.J."/>
            <person name="Osmani S.A."/>
            <person name="DeSouza C.P.C."/>
            <person name="Glass N.L."/>
            <person name="Orbach M.J."/>
            <person name="Berglund J.A."/>
            <person name="Voelker R."/>
            <person name="Yarden O."/>
            <person name="Plamann M."/>
            <person name="Seiler S."/>
            <person name="Dunlap J.C."/>
            <person name="Radford A."/>
            <person name="Aramayo R."/>
            <person name="Natvig D.O."/>
            <person name="Alex L.A."/>
            <person name="Mannhaupt G."/>
            <person name="Ebbole D.J."/>
            <person name="Freitag M."/>
            <person name="Paulsen I."/>
            <person name="Sachs M.S."/>
            <person name="Lander E.S."/>
            <person name="Nusbaum C."/>
            <person name="Birren B.W."/>
        </authorList>
    </citation>
    <scope>NUCLEOTIDE SEQUENCE [LARGE SCALE GENOMIC DNA]</scope>
    <source>
        <strain>ATCC 24698 / 74-OR23-1A / CBS 708.71 / DSM 1257 / FGSC 987</strain>
    </source>
</reference>
<reference key="2">
    <citation type="journal article" date="2007" name="Eukaryot. Cell">
        <title>Supramolecular organization of the respiratory chain in Neurospora crassa mitochondria.</title>
        <authorList>
            <person name="Marques I."/>
            <person name="Dencher N.A."/>
            <person name="Videira A."/>
            <person name="Krause F."/>
        </authorList>
    </citation>
    <scope>COMPOSITION OF THE CYTOCHROME C OXIDASE COMPLEX</scope>
</reference>
<reference key="3">
    <citation type="journal article" date="2019" name="IUCrJ">
        <title>Cryo-EM structure of Neurospora crassa respiratory complex IV.</title>
        <authorList>
            <person name="Bausewein T."/>
            <person name="Nussberger S."/>
            <person name="Kuehlbrandt W."/>
        </authorList>
    </citation>
    <scope>SUBUNIT</scope>
</reference>
<sequence>MFAQRQMFFARLAANLRAPAVRQTVQRRFASTPANESGKNAFVREREAVKQHAAETTELWRKISLYGIPPALALAGYNAYTLYNEHWEHWSHLPPLEERTEYPYQNIRTRNYPWGDGDKTLFWNESVNYHNRDKVT</sequence>
<organism>
    <name type="scientific">Neurospora crassa (strain ATCC 24698 / 74-OR23-1A / CBS 708.71 / DSM 1257 / FGSC 987)</name>
    <dbReference type="NCBI Taxonomy" id="367110"/>
    <lineage>
        <taxon>Eukaryota</taxon>
        <taxon>Fungi</taxon>
        <taxon>Dikarya</taxon>
        <taxon>Ascomycota</taxon>
        <taxon>Pezizomycotina</taxon>
        <taxon>Sordariomycetes</taxon>
        <taxon>Sordariomycetidae</taxon>
        <taxon>Sordariales</taxon>
        <taxon>Sordariaceae</taxon>
        <taxon>Neurospora</taxon>
    </lineage>
</organism>
<accession>V5IRD7</accession>
<gene>
    <name type="primary">eat-5</name>
    <name type="ORF">NCU01962</name>
</gene>